<comment type="function">
    <text evidence="1">Required for rescue of stalled ribosomes mediated by trans-translation. Binds to transfer-messenger RNA (tmRNA), required for stable association of tmRNA with ribosomes. tmRNA and SmpB together mimic tRNA shape, replacing the anticodon stem-loop with SmpB. tmRNA is encoded by the ssrA gene; the 2 termini fold to resemble tRNA(Ala) and it encodes a 'tag peptide', a short internal open reading frame. During trans-translation Ala-aminoacylated tmRNA acts like a tRNA, entering the A-site of stalled ribosomes, displacing the stalled mRNA. The ribosome then switches to translate the ORF on the tmRNA; the nascent peptide is terminated with the 'tag peptide' encoded by the tmRNA and targeted for degradation. The ribosome is freed to recommence translation, which seems to be the essential function of trans-translation.</text>
</comment>
<comment type="subcellular location">
    <subcellularLocation>
        <location evidence="1">Cytoplasm</location>
    </subcellularLocation>
    <text evidence="1">The tmRNA-SmpB complex associates with stalled 70S ribosomes.</text>
</comment>
<comment type="similarity">
    <text evidence="1">Belongs to the SmpB family.</text>
</comment>
<keyword id="KW-0963">Cytoplasm</keyword>
<keyword id="KW-0694">RNA-binding</keyword>
<organism>
    <name type="scientific">Chloroflexus aurantiacus (strain ATCC 29364 / DSM 637 / Y-400-fl)</name>
    <dbReference type="NCBI Taxonomy" id="480224"/>
    <lineage>
        <taxon>Bacteria</taxon>
        <taxon>Bacillati</taxon>
        <taxon>Chloroflexota</taxon>
        <taxon>Chloroflexia</taxon>
        <taxon>Chloroflexales</taxon>
        <taxon>Chloroflexineae</taxon>
        <taxon>Chloroflexaceae</taxon>
        <taxon>Chloroflexus</taxon>
    </lineage>
</organism>
<feature type="chain" id="PRO_1000116855" description="SsrA-binding protein">
    <location>
        <begin position="1"/>
        <end position="160"/>
    </location>
</feature>
<protein>
    <recommendedName>
        <fullName evidence="1">SsrA-binding protein</fullName>
    </recommendedName>
    <alternativeName>
        <fullName evidence="1">Small protein B</fullName>
    </alternativeName>
</protein>
<name>SSRP_CHLSY</name>
<dbReference type="EMBL" id="CP001364">
    <property type="protein sequence ID" value="ACM54949.1"/>
    <property type="molecule type" value="Genomic_DNA"/>
</dbReference>
<dbReference type="SMR" id="B9LD60"/>
<dbReference type="KEGG" id="chl:Chy400_3578"/>
<dbReference type="HOGENOM" id="CLU_108953_0_0_0"/>
<dbReference type="OrthoDB" id="9805462at2"/>
<dbReference type="GO" id="GO:0005829">
    <property type="term" value="C:cytosol"/>
    <property type="evidence" value="ECO:0007669"/>
    <property type="project" value="TreeGrafter"/>
</dbReference>
<dbReference type="GO" id="GO:0003723">
    <property type="term" value="F:RNA binding"/>
    <property type="evidence" value="ECO:0007669"/>
    <property type="project" value="UniProtKB-UniRule"/>
</dbReference>
<dbReference type="GO" id="GO:0070929">
    <property type="term" value="P:trans-translation"/>
    <property type="evidence" value="ECO:0007669"/>
    <property type="project" value="UniProtKB-UniRule"/>
</dbReference>
<dbReference type="CDD" id="cd09294">
    <property type="entry name" value="SmpB"/>
    <property type="match status" value="1"/>
</dbReference>
<dbReference type="Gene3D" id="2.40.280.10">
    <property type="match status" value="1"/>
</dbReference>
<dbReference type="HAMAP" id="MF_00023">
    <property type="entry name" value="SmpB"/>
    <property type="match status" value="1"/>
</dbReference>
<dbReference type="InterPro" id="IPR023620">
    <property type="entry name" value="SmpB"/>
</dbReference>
<dbReference type="InterPro" id="IPR000037">
    <property type="entry name" value="SsrA-bd_prot"/>
</dbReference>
<dbReference type="InterPro" id="IPR020081">
    <property type="entry name" value="SsrA-bd_prot_CS"/>
</dbReference>
<dbReference type="NCBIfam" id="NF003843">
    <property type="entry name" value="PRK05422.1"/>
    <property type="match status" value="1"/>
</dbReference>
<dbReference type="NCBIfam" id="TIGR00086">
    <property type="entry name" value="smpB"/>
    <property type="match status" value="1"/>
</dbReference>
<dbReference type="PANTHER" id="PTHR30308:SF2">
    <property type="entry name" value="SSRA-BINDING PROTEIN"/>
    <property type="match status" value="1"/>
</dbReference>
<dbReference type="PANTHER" id="PTHR30308">
    <property type="entry name" value="TMRNA-BINDING COMPONENT OF TRANS-TRANSLATION TAGGING COMPLEX"/>
    <property type="match status" value="1"/>
</dbReference>
<dbReference type="Pfam" id="PF01668">
    <property type="entry name" value="SmpB"/>
    <property type="match status" value="1"/>
</dbReference>
<dbReference type="SUPFAM" id="SSF74982">
    <property type="entry name" value="Small protein B (SmpB)"/>
    <property type="match status" value="1"/>
</dbReference>
<dbReference type="PROSITE" id="PS01317">
    <property type="entry name" value="SSRP"/>
    <property type="match status" value="1"/>
</dbReference>
<reference key="1">
    <citation type="submission" date="2009-01" db="EMBL/GenBank/DDBJ databases">
        <title>Complete sequence of Chloroflexus sp. Y-400-fl.</title>
        <authorList>
            <consortium name="US DOE Joint Genome Institute"/>
            <person name="Lucas S."/>
            <person name="Copeland A."/>
            <person name="Lapidus A."/>
            <person name="Glavina del Rio T."/>
            <person name="Dalin E."/>
            <person name="Tice H."/>
            <person name="Bruce D."/>
            <person name="Goodwin L."/>
            <person name="Pitluck S."/>
            <person name="Sims D."/>
            <person name="Kiss H."/>
            <person name="Brettin T."/>
            <person name="Detter J.C."/>
            <person name="Han C."/>
            <person name="Larimer F."/>
            <person name="Land M."/>
            <person name="Hauser L."/>
            <person name="Kyrpides N."/>
            <person name="Ovchinnikova G."/>
            <person name="Bryant D.A."/>
            <person name="Richardson P."/>
        </authorList>
    </citation>
    <scope>NUCLEOTIDE SEQUENCE [LARGE SCALE GENOMIC DNA]</scope>
    <source>
        <strain>ATCC 29364 / DSM 637 / Y-400-fl</strain>
    </source>
</reference>
<proteinExistence type="inferred from homology"/>
<gene>
    <name evidence="1" type="primary">smpB</name>
    <name type="ordered locus">Chy400_3578</name>
</gene>
<accession>B9LD60</accession>
<evidence type="ECO:0000255" key="1">
    <source>
        <dbReference type="HAMAP-Rule" id="MF_00023"/>
    </source>
</evidence>
<sequence>MTATKHKHPGVVAENRKARHDYDIEETIEAGIVLSGSEIKSVRAGRVNLRGSFARVIDDEVFLYDAHIAPYEQSGKYFNHDPMRPRKLLLHRREINRLNGLVRMKGMTLVPLKVYFKGRRAKVELGVARGKKIYDKREDIARRDAARDIDRALKRARHDL</sequence>